<evidence type="ECO:0000255" key="1">
    <source>
        <dbReference type="HAMAP-Rule" id="MF_01272"/>
    </source>
</evidence>
<gene>
    <name evidence="1" type="primary">isdG</name>
    <name type="ordered locus">BALH_4126</name>
</gene>
<comment type="function">
    <text evidence="1">Allows bacterial pathogens to use the host heme as an iron source. Catalyzes the oxidative degradation of the heme macrocyclic porphyrin ring to the biliverdin in the presence of a suitable electron donor such as ascorbate or NADPH--cytochrome P450 reductase, with subsequent release of free iron.</text>
</comment>
<comment type="catalytic activity">
    <reaction evidence="1">
        <text>heme b + 3 reduced [NADPH--hemoprotein reductase] + 3 O2 = biliverdin IXalpha + CO + Fe(2+) + 3 oxidized [NADPH--hemoprotein reductase] + 3 H2O + H(+)</text>
        <dbReference type="Rhea" id="RHEA:21764"/>
        <dbReference type="Rhea" id="RHEA-COMP:11964"/>
        <dbReference type="Rhea" id="RHEA-COMP:11965"/>
        <dbReference type="ChEBI" id="CHEBI:15377"/>
        <dbReference type="ChEBI" id="CHEBI:15378"/>
        <dbReference type="ChEBI" id="CHEBI:15379"/>
        <dbReference type="ChEBI" id="CHEBI:17245"/>
        <dbReference type="ChEBI" id="CHEBI:29033"/>
        <dbReference type="ChEBI" id="CHEBI:57618"/>
        <dbReference type="ChEBI" id="CHEBI:57991"/>
        <dbReference type="ChEBI" id="CHEBI:58210"/>
        <dbReference type="ChEBI" id="CHEBI:60344"/>
        <dbReference type="EC" id="1.14.14.18"/>
    </reaction>
</comment>
<comment type="subunit">
    <text evidence="1">Homodimer.</text>
</comment>
<comment type="subcellular location">
    <subcellularLocation>
        <location evidence="1">Cytoplasm</location>
    </subcellularLocation>
</comment>
<comment type="similarity">
    <text evidence="1">Belongs to the antibiotic biosynthesis monooxygenase family. Heme-degrading monooxygenase IsdG subfamily.</text>
</comment>
<keyword id="KW-0963">Cytoplasm</keyword>
<keyword id="KW-0349">Heme</keyword>
<keyword id="KW-0408">Iron</keyword>
<keyword id="KW-0479">Metal-binding</keyword>
<keyword id="KW-0503">Monooxygenase</keyword>
<keyword id="KW-0560">Oxidoreductase</keyword>
<protein>
    <recommendedName>
        <fullName evidence="1">Heme-degrading monooxygenase</fullName>
        <ecNumber evidence="1">1.14.14.18</ecNumber>
    </recommendedName>
    <alternativeName>
        <fullName evidence="1">Heme oxygenase</fullName>
    </alternativeName>
    <alternativeName>
        <fullName evidence="1">Iron-regulated surface determinant</fullName>
    </alternativeName>
    <alternativeName>
        <fullName evidence="1">Iron-responsive surface determinant</fullName>
    </alternativeName>
</protein>
<proteinExistence type="inferred from homology"/>
<dbReference type="EC" id="1.14.14.18" evidence="1"/>
<dbReference type="EMBL" id="CP000485">
    <property type="protein sequence ID" value="ABK87336.1"/>
    <property type="molecule type" value="Genomic_DNA"/>
</dbReference>
<dbReference type="RefSeq" id="WP_000587815.1">
    <property type="nucleotide sequence ID" value="NC_008600.1"/>
</dbReference>
<dbReference type="SMR" id="A0RJE3"/>
<dbReference type="GeneID" id="92798870"/>
<dbReference type="KEGG" id="btl:BALH_4126"/>
<dbReference type="HOGENOM" id="CLU_141544_2_1_9"/>
<dbReference type="GO" id="GO:0005737">
    <property type="term" value="C:cytoplasm"/>
    <property type="evidence" value="ECO:0007669"/>
    <property type="project" value="UniProtKB-SubCell"/>
</dbReference>
<dbReference type="GO" id="GO:0020037">
    <property type="term" value="F:heme binding"/>
    <property type="evidence" value="ECO:0007669"/>
    <property type="project" value="UniProtKB-UniRule"/>
</dbReference>
<dbReference type="GO" id="GO:0004392">
    <property type="term" value="F:heme oxygenase (decyclizing) activity"/>
    <property type="evidence" value="ECO:0007669"/>
    <property type="project" value="UniProtKB-UniRule"/>
</dbReference>
<dbReference type="GO" id="GO:0005506">
    <property type="term" value="F:iron ion binding"/>
    <property type="evidence" value="ECO:0007669"/>
    <property type="project" value="UniProtKB-UniRule"/>
</dbReference>
<dbReference type="GO" id="GO:0042167">
    <property type="term" value="P:heme catabolic process"/>
    <property type="evidence" value="ECO:0007669"/>
    <property type="project" value="UniProtKB-UniRule"/>
</dbReference>
<dbReference type="GO" id="GO:0033212">
    <property type="term" value="P:iron import into cell"/>
    <property type="evidence" value="ECO:0007669"/>
    <property type="project" value="InterPro"/>
</dbReference>
<dbReference type="Gene3D" id="3.30.70.100">
    <property type="match status" value="1"/>
</dbReference>
<dbReference type="HAMAP" id="MF_01272">
    <property type="entry name" value="Heme_degrading_monooxygenase"/>
    <property type="match status" value="1"/>
</dbReference>
<dbReference type="InterPro" id="IPR007138">
    <property type="entry name" value="ABM_dom"/>
</dbReference>
<dbReference type="InterPro" id="IPR011008">
    <property type="entry name" value="Dimeric_a/b-barrel"/>
</dbReference>
<dbReference type="InterPro" id="IPR050404">
    <property type="entry name" value="Heme-degrading_MO"/>
</dbReference>
<dbReference type="InterPro" id="IPR023953">
    <property type="entry name" value="IsdG"/>
</dbReference>
<dbReference type="NCBIfam" id="NF009839">
    <property type="entry name" value="PRK13314.1"/>
    <property type="match status" value="1"/>
</dbReference>
<dbReference type="PANTHER" id="PTHR34474:SF4">
    <property type="entry name" value="HEME OXYGENASE (STAPHYLOBILIN-PRODUCING) 1"/>
    <property type="match status" value="1"/>
</dbReference>
<dbReference type="PANTHER" id="PTHR34474">
    <property type="entry name" value="SIGNAL TRANSDUCTION PROTEIN TRAP"/>
    <property type="match status" value="1"/>
</dbReference>
<dbReference type="Pfam" id="PF03992">
    <property type="entry name" value="ABM"/>
    <property type="match status" value="1"/>
</dbReference>
<dbReference type="SUPFAM" id="SSF54909">
    <property type="entry name" value="Dimeric alpha+beta barrel"/>
    <property type="match status" value="1"/>
</dbReference>
<dbReference type="PROSITE" id="PS51725">
    <property type="entry name" value="ABM"/>
    <property type="match status" value="1"/>
</dbReference>
<reference key="1">
    <citation type="journal article" date="2007" name="J. Bacteriol.">
        <title>The complete genome sequence of Bacillus thuringiensis Al Hakam.</title>
        <authorList>
            <person name="Challacombe J.F."/>
            <person name="Altherr M.R."/>
            <person name="Xie G."/>
            <person name="Bhotika S.S."/>
            <person name="Brown N."/>
            <person name="Bruce D."/>
            <person name="Campbell C.S."/>
            <person name="Campbell M.L."/>
            <person name="Chen J."/>
            <person name="Chertkov O."/>
            <person name="Cleland C."/>
            <person name="Dimitrijevic M."/>
            <person name="Doggett N.A."/>
            <person name="Fawcett J.J."/>
            <person name="Glavina T."/>
            <person name="Goodwin L.A."/>
            <person name="Green L.D."/>
            <person name="Han C.S."/>
            <person name="Hill K.K."/>
            <person name="Hitchcock P."/>
            <person name="Jackson P.J."/>
            <person name="Keim P."/>
            <person name="Kewalramani A.R."/>
            <person name="Longmire J."/>
            <person name="Lucas S."/>
            <person name="Malfatti S."/>
            <person name="Martinez D."/>
            <person name="McMurry K."/>
            <person name="Meincke L.J."/>
            <person name="Misra M."/>
            <person name="Moseman B.L."/>
            <person name="Mundt M."/>
            <person name="Munk A.C."/>
            <person name="Okinaka R.T."/>
            <person name="Parson-Quintana B."/>
            <person name="Reilly L.P."/>
            <person name="Richardson P."/>
            <person name="Robinson D.L."/>
            <person name="Saunders E."/>
            <person name="Tapia R."/>
            <person name="Tesmer J.G."/>
            <person name="Thayer N."/>
            <person name="Thompson L.S."/>
            <person name="Tice H."/>
            <person name="Ticknor L.O."/>
            <person name="Wills P.L."/>
            <person name="Gilna P."/>
            <person name="Brettin T.S."/>
        </authorList>
    </citation>
    <scope>NUCLEOTIDE SEQUENCE [LARGE SCALE GENOMIC DNA]</scope>
    <source>
        <strain>Al Hakam</strain>
    </source>
</reference>
<feature type="chain" id="PRO_1000067382" description="Heme-degrading monooxygenase">
    <location>
        <begin position="1"/>
        <end position="107"/>
    </location>
</feature>
<feature type="domain" description="ABM" evidence="1">
    <location>
        <begin position="2"/>
        <end position="94"/>
    </location>
</feature>
<feature type="binding site" evidence="1">
    <location>
        <position position="6"/>
    </location>
    <ligand>
        <name>Fe cation</name>
        <dbReference type="ChEBI" id="CHEBI:24875"/>
    </ligand>
</feature>
<feature type="binding site" description="axial binding residue" evidence="1">
    <location>
        <position position="76"/>
    </location>
    <ligand>
        <name>heme</name>
        <dbReference type="ChEBI" id="CHEBI:30413"/>
    </ligand>
    <ligandPart>
        <name>Fe</name>
        <dbReference type="ChEBI" id="CHEBI:18248"/>
    </ligandPart>
</feature>
<feature type="site" description="Transition state stabilizer" evidence="1">
    <location>
        <position position="66"/>
    </location>
</feature>
<accession>A0RJE3</accession>
<sequence length="107" mass="12004">MIIVTNTAKITKGNGHKLIDRFNKVGQVETMPGFLGLEVLLTQNTVDYDEVTISTRWNAKEDFQGWTKSPAFKAAHSHQGGMPDYILDNKISYYDVKVVRMPMAAAQ</sequence>
<organism>
    <name type="scientific">Bacillus thuringiensis (strain Al Hakam)</name>
    <dbReference type="NCBI Taxonomy" id="412694"/>
    <lineage>
        <taxon>Bacteria</taxon>
        <taxon>Bacillati</taxon>
        <taxon>Bacillota</taxon>
        <taxon>Bacilli</taxon>
        <taxon>Bacillales</taxon>
        <taxon>Bacillaceae</taxon>
        <taxon>Bacillus</taxon>
        <taxon>Bacillus cereus group</taxon>
    </lineage>
</organism>
<name>HDOX_BACAH</name>